<reference key="1">
    <citation type="journal article" date="2006" name="Biochimie">
        <title>Analysis of expressed sequence tags from the venom ducts of Conus striatus: focusing on the expression profile of conotoxins.</title>
        <authorList>
            <person name="Pi C."/>
            <person name="Liu Y."/>
            <person name="Peng C."/>
            <person name="Jiang X."/>
            <person name="Liu J."/>
            <person name="Xu B."/>
            <person name="Yu X."/>
            <person name="Yu Y."/>
            <person name="Jiang X."/>
            <person name="Wang L."/>
            <person name="Dong M."/>
            <person name="Chen S."/>
            <person name="Xu A.-L."/>
        </authorList>
    </citation>
    <scope>NUCLEOTIDE SEQUENCE [MRNA]</scope>
    <source>
        <tissue>Venom duct</tissue>
    </source>
</reference>
<proteinExistence type="evidence at transcript level"/>
<evidence type="ECO:0000250" key="1"/>
<evidence type="ECO:0000255" key="2"/>
<evidence type="ECO:0000305" key="3"/>
<keyword id="KW-1015">Disulfide bond</keyword>
<keyword id="KW-0960">Knottin</keyword>
<keyword id="KW-0964">Secreted</keyword>
<keyword id="KW-0732">Signal</keyword>
<keyword id="KW-0800">Toxin</keyword>
<feature type="signal peptide" evidence="2">
    <location>
        <begin position="1"/>
        <end position="19"/>
    </location>
</feature>
<feature type="propeptide" id="PRO_0000345110" evidence="1">
    <location>
        <begin position="20"/>
        <end position="50"/>
    </location>
</feature>
<feature type="peptide" id="PRO_0000345111" description="Conotoxin S6.11">
    <location>
        <begin position="51"/>
        <end position="77"/>
    </location>
</feature>
<feature type="disulfide bond" evidence="1">
    <location>
        <begin position="51"/>
        <end position="65"/>
    </location>
</feature>
<feature type="disulfide bond" evidence="1">
    <location>
        <begin position="58"/>
        <end position="69"/>
    </location>
</feature>
<feature type="disulfide bond" evidence="1">
    <location>
        <begin position="64"/>
        <end position="74"/>
    </location>
</feature>
<comment type="subcellular location">
    <subcellularLocation>
        <location evidence="1">Secreted</location>
    </subcellularLocation>
</comment>
<comment type="tissue specificity">
    <text>Expressed by the venom duct.</text>
</comment>
<comment type="domain">
    <text evidence="1">The presence of a 'disulfide through disulfide knot' structurally defines this protein as a knottin.</text>
</comment>
<comment type="domain">
    <text>The cysteine framework is VI/VII (C-C-CC-C-C).</text>
</comment>
<comment type="similarity">
    <text evidence="3">Belongs to the conotoxin O2 superfamily.</text>
</comment>
<name>O26B_CONST</name>
<dbReference type="SMR" id="P0C834"/>
<dbReference type="ConoServer" id="3539">
    <property type="toxin name" value="S6.11 precursor"/>
</dbReference>
<dbReference type="GO" id="GO:0005576">
    <property type="term" value="C:extracellular region"/>
    <property type="evidence" value="ECO:0007669"/>
    <property type="project" value="UniProtKB-SubCell"/>
</dbReference>
<dbReference type="GO" id="GO:0008200">
    <property type="term" value="F:ion channel inhibitor activity"/>
    <property type="evidence" value="ECO:0007669"/>
    <property type="project" value="InterPro"/>
</dbReference>
<dbReference type="GO" id="GO:0090729">
    <property type="term" value="F:toxin activity"/>
    <property type="evidence" value="ECO:0007669"/>
    <property type="project" value="UniProtKB-KW"/>
</dbReference>
<dbReference type="InterPro" id="IPR004214">
    <property type="entry name" value="Conotoxin"/>
</dbReference>
<dbReference type="Pfam" id="PF02950">
    <property type="entry name" value="Conotoxin"/>
    <property type="match status" value="1"/>
</dbReference>
<protein>
    <recommendedName>
        <fullName>Conotoxin S6.11</fullName>
    </recommendedName>
</protein>
<accession>P0C834</accession>
<sequence length="77" mass="8754">MEKLTILLLVAAVLMSTQALIQGGLDERQKAKSNFFSKRKSNAESWWEGECRTWNAPCSFTSQCCFGKCAHHRCIAW</sequence>
<organism>
    <name type="scientific">Conus striatus</name>
    <name type="common">Striated cone</name>
    <dbReference type="NCBI Taxonomy" id="6493"/>
    <lineage>
        <taxon>Eukaryota</taxon>
        <taxon>Metazoa</taxon>
        <taxon>Spiralia</taxon>
        <taxon>Lophotrochozoa</taxon>
        <taxon>Mollusca</taxon>
        <taxon>Gastropoda</taxon>
        <taxon>Caenogastropoda</taxon>
        <taxon>Neogastropoda</taxon>
        <taxon>Conoidea</taxon>
        <taxon>Conidae</taxon>
        <taxon>Conus</taxon>
        <taxon>Pionoconus</taxon>
    </lineage>
</organism>